<dbReference type="PIR" id="A39855">
    <property type="entry name" value="A39855"/>
</dbReference>
<dbReference type="PDB" id="1HRL">
    <property type="method" value="NMR"/>
    <property type="chains" value="A=1-23"/>
</dbReference>
<dbReference type="PDBsum" id="1HRL"/>
<dbReference type="SMR" id="P30253"/>
<dbReference type="EvolutionaryTrace" id="P30253"/>
<dbReference type="GO" id="GO:0005615">
    <property type="term" value="C:extracellular space"/>
    <property type="evidence" value="ECO:0007669"/>
    <property type="project" value="UniProtKB-KW"/>
</dbReference>
<dbReference type="GO" id="GO:0005125">
    <property type="term" value="F:cytokine activity"/>
    <property type="evidence" value="ECO:0007669"/>
    <property type="project" value="UniProtKB-KW"/>
</dbReference>
<dbReference type="InterPro" id="IPR003463">
    <property type="entry name" value="GBP_PSP"/>
</dbReference>
<dbReference type="Pfam" id="PF02425">
    <property type="entry name" value="GBP_PSP"/>
    <property type="match status" value="1"/>
</dbReference>
<reference key="1">
    <citation type="journal article" date="1991" name="J. Biol. Chem.">
        <title>Isolation and identification of paralytic peptides from hemolymph of the lepidopteran insects Manduca sexta, Spodoptera exigua, and Heliothis virescens.</title>
        <authorList>
            <person name="Skinner W.S."/>
            <person name="Dennis P.A."/>
            <person name="Li J.P."/>
            <person name="Summerfelt R.M."/>
            <person name="Carney R.L."/>
            <person name="Quistad G.B."/>
        </authorList>
    </citation>
    <scope>PROTEIN SEQUENCE</scope>
    <source>
        <tissue>Hemolymph</tissue>
    </source>
</reference>
<reference key="2">
    <citation type="journal article" date="1999" name="J. Pept. Res.">
        <title>Structure of a paralytic peptide from an insect, Manduca sexta.</title>
        <authorList>
            <person name="Yu X.Q."/>
            <person name="Prakash O."/>
            <person name="Kanost M.R."/>
        </authorList>
    </citation>
    <scope>STRUCTURE BY NMR</scope>
    <scope>DISULFIDE BOND</scope>
</reference>
<accession>P30253</accession>
<organism>
    <name type="scientific">Manduca sexta</name>
    <name type="common">Tobacco hawkmoth</name>
    <name type="synonym">Tobacco hornworm</name>
    <dbReference type="NCBI Taxonomy" id="7130"/>
    <lineage>
        <taxon>Eukaryota</taxon>
        <taxon>Metazoa</taxon>
        <taxon>Ecdysozoa</taxon>
        <taxon>Arthropoda</taxon>
        <taxon>Hexapoda</taxon>
        <taxon>Insecta</taxon>
        <taxon>Pterygota</taxon>
        <taxon>Neoptera</taxon>
        <taxon>Endopterygota</taxon>
        <taxon>Lepidoptera</taxon>
        <taxon>Glossata</taxon>
        <taxon>Ditrysia</taxon>
        <taxon>Bombycoidea</taxon>
        <taxon>Sphingidae</taxon>
        <taxon>Sphinginae</taxon>
        <taxon>Sphingini</taxon>
        <taxon>Manduca</taxon>
    </lineage>
</organism>
<name>PAP1_MANSE</name>
<keyword id="KW-0002">3D-structure</keyword>
<keyword id="KW-0202">Cytokine</keyword>
<keyword id="KW-0903">Direct protein sequencing</keyword>
<keyword id="KW-1015">Disulfide bond</keyword>
<feature type="peptide" id="PRO_0000043911" description="Paralytic peptide 1">
    <location>
        <begin position="1"/>
        <end position="23"/>
    </location>
</feature>
<feature type="disulfide bond" evidence="1">
    <location>
        <begin position="7"/>
        <end position="19"/>
    </location>
</feature>
<feature type="turn" evidence="3">
    <location>
        <begin position="8"/>
        <end position="10"/>
    </location>
</feature>
<feature type="strand" evidence="3">
    <location>
        <begin position="11"/>
        <end position="14"/>
    </location>
</feature>
<feature type="turn" evidence="3">
    <location>
        <begin position="15"/>
        <end position="17"/>
    </location>
</feature>
<feature type="strand" evidence="3">
    <location>
        <begin position="18"/>
        <end position="21"/>
    </location>
</feature>
<proteinExistence type="evidence at protein level"/>
<comment type="function">
    <text>Causes rapid, rigid paralysis when injected into Lepidopteran larvae. The physiological role may be to reduce hemolymph loss following injury and promote wound healing.</text>
</comment>
<comment type="tissue specificity">
    <text>Hemolymph.</text>
</comment>
<comment type="similarity">
    <text evidence="2">Belongs to the GBP/PSP1/paralytic peptide family.</text>
</comment>
<sequence>ENFAGGCATGYLRTADGRCKPTF</sequence>
<evidence type="ECO:0000269" key="1">
    <source>
    </source>
</evidence>
<evidence type="ECO:0000305" key="2"/>
<evidence type="ECO:0007829" key="3">
    <source>
        <dbReference type="PDB" id="1HRL"/>
    </source>
</evidence>
<protein>
    <recommendedName>
        <fullName>Paralytic peptide 1</fullName>
    </recommendedName>
    <alternativeName>
        <fullName>Paralytic peptide I</fullName>
        <shortName>PP I</shortName>
    </alternativeName>
</protein>